<accession>B5BG02</accession>
<evidence type="ECO:0000255" key="1">
    <source>
        <dbReference type="HAMAP-Rule" id="MF_00548"/>
    </source>
</evidence>
<comment type="function">
    <text evidence="1">Mediates zinc uptake. May also transport other divalent cations.</text>
</comment>
<comment type="catalytic activity">
    <reaction evidence="1">
        <text>Zn(2+)(in) = Zn(2+)(out)</text>
        <dbReference type="Rhea" id="RHEA:29351"/>
        <dbReference type="ChEBI" id="CHEBI:29105"/>
    </reaction>
</comment>
<comment type="subcellular location">
    <subcellularLocation>
        <location evidence="1">Cell inner membrane</location>
        <topology evidence="1">Multi-pass membrane protein</topology>
    </subcellularLocation>
</comment>
<comment type="similarity">
    <text evidence="1">Belongs to the ZIP transporter (TC 2.A.5) family. ZupT subfamily.</text>
</comment>
<sequence length="257" mass="26576">MSVPLILTLLAGAATFIGAFLGVLGQKPSNRMLAFSLGFAAGIMLLISLMEMLPAALDTEGMSPVLGYGMFIIGLLGYFGLDRLLPHAHPQDLVQKRQQPLPGSIKRTAILLTLGISLHNFPEGIATFVTASSNLELGFGIALAVALHNIPEGLAVAGPVYAATGSKRTAIFWAGISGMAEILGGVLAWLILGSLVSPIVMAAIMAAVAGIMVALSVDELMPLAKEIDPNNNPSYGVLCGMSIMGLSLVILQTIGIG</sequence>
<gene>
    <name evidence="1" type="primary">zupT</name>
    <name type="ordered locus">SSPA2855</name>
</gene>
<organism>
    <name type="scientific">Salmonella paratyphi A (strain AKU_12601)</name>
    <dbReference type="NCBI Taxonomy" id="554290"/>
    <lineage>
        <taxon>Bacteria</taxon>
        <taxon>Pseudomonadati</taxon>
        <taxon>Pseudomonadota</taxon>
        <taxon>Gammaproteobacteria</taxon>
        <taxon>Enterobacterales</taxon>
        <taxon>Enterobacteriaceae</taxon>
        <taxon>Salmonella</taxon>
    </lineage>
</organism>
<proteinExistence type="inferred from homology"/>
<name>ZUPT_SALPK</name>
<feature type="chain" id="PRO_1000128966" description="Zinc transporter ZupT">
    <location>
        <begin position="1"/>
        <end position="257"/>
    </location>
</feature>
<feature type="transmembrane region" description="Helical" evidence="1">
    <location>
        <begin position="5"/>
        <end position="25"/>
    </location>
</feature>
<feature type="transmembrane region" description="Helical" evidence="1">
    <location>
        <begin position="33"/>
        <end position="53"/>
    </location>
</feature>
<feature type="transmembrane region" description="Helical" evidence="1">
    <location>
        <begin position="61"/>
        <end position="81"/>
    </location>
</feature>
<feature type="transmembrane region" description="Helical" evidence="1">
    <location>
        <begin position="109"/>
        <end position="129"/>
    </location>
</feature>
<feature type="transmembrane region" description="Helical" evidence="1">
    <location>
        <begin position="137"/>
        <end position="157"/>
    </location>
</feature>
<feature type="transmembrane region" description="Helical" evidence="1">
    <location>
        <begin position="171"/>
        <end position="191"/>
    </location>
</feature>
<feature type="transmembrane region" description="Helical" evidence="1">
    <location>
        <begin position="195"/>
        <end position="215"/>
    </location>
</feature>
<feature type="transmembrane region" description="Helical" evidence="1">
    <location>
        <begin position="236"/>
        <end position="256"/>
    </location>
</feature>
<feature type="binding site" description="M2 metal binding site" evidence="1">
    <location>
        <position position="120"/>
    </location>
    <ligand>
        <name>Fe(2+)</name>
        <dbReference type="ChEBI" id="CHEBI:29033"/>
    </ligand>
</feature>
<feature type="binding site" description="M2 metal binding site" evidence="1">
    <location>
        <position position="123"/>
    </location>
    <ligand>
        <name>Fe(2+)</name>
        <dbReference type="ChEBI" id="CHEBI:29033"/>
    </ligand>
</feature>
<feature type="binding site" description="M1 metal binding site" evidence="1">
    <location>
        <position position="123"/>
    </location>
    <ligand>
        <name>Zn(2+)</name>
        <dbReference type="ChEBI" id="CHEBI:29105"/>
    </ligand>
</feature>
<feature type="binding site" description="M1 metal binding site" evidence="1">
    <location>
        <position position="148"/>
    </location>
    <ligand>
        <name>Zn(2+)</name>
        <dbReference type="ChEBI" id="CHEBI:29105"/>
    </ligand>
</feature>
<feature type="binding site" description="M2 metal binding site" evidence="1">
    <location>
        <position position="149"/>
    </location>
    <ligand>
        <name>Fe(2+)</name>
        <dbReference type="ChEBI" id="CHEBI:29033"/>
    </ligand>
</feature>
<feature type="binding site" description="M2 metal binding site" evidence="1">
    <location>
        <position position="152"/>
    </location>
    <ligand>
        <name>Fe(2+)</name>
        <dbReference type="ChEBI" id="CHEBI:29033"/>
    </ligand>
</feature>
<feature type="binding site" description="M1 metal binding site" evidence="1">
    <location>
        <position position="152"/>
    </location>
    <ligand>
        <name>Zn(2+)</name>
        <dbReference type="ChEBI" id="CHEBI:29105"/>
    </ligand>
</feature>
<feature type="binding site" description="M2 metal binding site" evidence="1">
    <location>
        <position position="181"/>
    </location>
    <ligand>
        <name>Fe(2+)</name>
        <dbReference type="ChEBI" id="CHEBI:29033"/>
    </ligand>
</feature>
<protein>
    <recommendedName>
        <fullName evidence="1">Zinc transporter ZupT</fullName>
    </recommendedName>
</protein>
<keyword id="KW-0997">Cell inner membrane</keyword>
<keyword id="KW-1003">Cell membrane</keyword>
<keyword id="KW-0406">Ion transport</keyword>
<keyword id="KW-0408">Iron</keyword>
<keyword id="KW-0472">Membrane</keyword>
<keyword id="KW-0479">Metal-binding</keyword>
<keyword id="KW-0812">Transmembrane</keyword>
<keyword id="KW-1133">Transmembrane helix</keyword>
<keyword id="KW-0813">Transport</keyword>
<keyword id="KW-0862">Zinc</keyword>
<keyword id="KW-0864">Zinc transport</keyword>
<dbReference type="EMBL" id="FM200053">
    <property type="protein sequence ID" value="CAR61102.1"/>
    <property type="molecule type" value="Genomic_DNA"/>
</dbReference>
<dbReference type="RefSeq" id="WP_000115869.1">
    <property type="nucleotide sequence ID" value="NC_011147.1"/>
</dbReference>
<dbReference type="SMR" id="B5BG02"/>
<dbReference type="KEGG" id="sek:SSPA2855"/>
<dbReference type="HOGENOM" id="CLU_015114_1_3_6"/>
<dbReference type="Proteomes" id="UP000001869">
    <property type="component" value="Chromosome"/>
</dbReference>
<dbReference type="GO" id="GO:0005886">
    <property type="term" value="C:plasma membrane"/>
    <property type="evidence" value="ECO:0007669"/>
    <property type="project" value="UniProtKB-SubCell"/>
</dbReference>
<dbReference type="GO" id="GO:0046872">
    <property type="term" value="F:metal ion binding"/>
    <property type="evidence" value="ECO:0007669"/>
    <property type="project" value="UniProtKB-KW"/>
</dbReference>
<dbReference type="GO" id="GO:0005385">
    <property type="term" value="F:zinc ion transmembrane transporter activity"/>
    <property type="evidence" value="ECO:0007669"/>
    <property type="project" value="UniProtKB-UniRule"/>
</dbReference>
<dbReference type="HAMAP" id="MF_00548">
    <property type="entry name" value="ZupT"/>
    <property type="match status" value="1"/>
</dbReference>
<dbReference type="InterPro" id="IPR003689">
    <property type="entry name" value="ZIP"/>
</dbReference>
<dbReference type="InterPro" id="IPR023498">
    <property type="entry name" value="Zn_transptr_ZupT"/>
</dbReference>
<dbReference type="NCBIfam" id="NF003243">
    <property type="entry name" value="PRK04201.1"/>
    <property type="match status" value="1"/>
</dbReference>
<dbReference type="PANTHER" id="PTHR11040:SF205">
    <property type="entry name" value="ZINC TRANSPORTER ZUPT"/>
    <property type="match status" value="1"/>
</dbReference>
<dbReference type="PANTHER" id="PTHR11040">
    <property type="entry name" value="ZINC/IRON TRANSPORTER"/>
    <property type="match status" value="1"/>
</dbReference>
<dbReference type="Pfam" id="PF02535">
    <property type="entry name" value="Zip"/>
    <property type="match status" value="2"/>
</dbReference>
<reference key="1">
    <citation type="journal article" date="2009" name="BMC Genomics">
        <title>Pseudogene accumulation in the evolutionary histories of Salmonella enterica serovars Paratyphi A and Typhi.</title>
        <authorList>
            <person name="Holt K.E."/>
            <person name="Thomson N.R."/>
            <person name="Wain J."/>
            <person name="Langridge G.C."/>
            <person name="Hasan R."/>
            <person name="Bhutta Z.A."/>
            <person name="Quail M.A."/>
            <person name="Norbertczak H."/>
            <person name="Walker D."/>
            <person name="Simmonds M."/>
            <person name="White B."/>
            <person name="Bason N."/>
            <person name="Mungall K."/>
            <person name="Dougan G."/>
            <person name="Parkhill J."/>
        </authorList>
    </citation>
    <scope>NUCLEOTIDE SEQUENCE [LARGE SCALE GENOMIC DNA]</scope>
    <source>
        <strain>AKU_12601</strain>
    </source>
</reference>